<comment type="function">
    <text evidence="1">Involved in the biosynthesis of lipid A, a phosphorylated glycolipid that anchors the lipopolysaccharide to the outer membrane of the cell.</text>
</comment>
<comment type="catalytic activity">
    <reaction evidence="1">
        <text>a (3R)-hydroxyacyl-[ACP] + UDP-N-acetyl-alpha-D-glucosamine = a UDP-3-O-[(3R)-3-hydroxyacyl]-N-acetyl-alpha-D-glucosamine + holo-[ACP]</text>
        <dbReference type="Rhea" id="RHEA:67812"/>
        <dbReference type="Rhea" id="RHEA-COMP:9685"/>
        <dbReference type="Rhea" id="RHEA-COMP:9945"/>
        <dbReference type="ChEBI" id="CHEBI:57705"/>
        <dbReference type="ChEBI" id="CHEBI:64479"/>
        <dbReference type="ChEBI" id="CHEBI:78827"/>
        <dbReference type="ChEBI" id="CHEBI:173225"/>
        <dbReference type="EC" id="2.3.1.129"/>
    </reaction>
</comment>
<comment type="pathway">
    <text evidence="1">Glycolipid biosynthesis; lipid IV(A) biosynthesis; lipid IV(A) from (3R)-3-hydroxytetradecanoyl-[acyl-carrier-protein] and UDP-N-acetyl-alpha-D-glucosamine: step 1/6.</text>
</comment>
<comment type="subunit">
    <text evidence="1">Homotrimer.</text>
</comment>
<comment type="subcellular location">
    <subcellularLocation>
        <location evidence="1">Cytoplasm</location>
    </subcellularLocation>
</comment>
<comment type="similarity">
    <text evidence="1">Belongs to the transferase hexapeptide repeat family. LpxA subfamily.</text>
</comment>
<dbReference type="EC" id="2.3.1.129" evidence="1"/>
<dbReference type="EMBL" id="CP000708">
    <property type="protein sequence ID" value="ABQ60169.1"/>
    <property type="molecule type" value="Genomic_DNA"/>
</dbReference>
<dbReference type="RefSeq" id="WP_002964279.1">
    <property type="nucleotide sequence ID" value="NC_009505.1"/>
</dbReference>
<dbReference type="SMR" id="A5VQS3"/>
<dbReference type="GeneID" id="97533598"/>
<dbReference type="KEGG" id="bov:BOV_1109"/>
<dbReference type="HOGENOM" id="CLU_061249_0_0_5"/>
<dbReference type="PhylomeDB" id="A5VQS3"/>
<dbReference type="UniPathway" id="UPA00359">
    <property type="reaction ID" value="UER00477"/>
</dbReference>
<dbReference type="Proteomes" id="UP000006383">
    <property type="component" value="Chromosome I"/>
</dbReference>
<dbReference type="GO" id="GO:0005737">
    <property type="term" value="C:cytoplasm"/>
    <property type="evidence" value="ECO:0007669"/>
    <property type="project" value="UniProtKB-SubCell"/>
</dbReference>
<dbReference type="GO" id="GO:0016020">
    <property type="term" value="C:membrane"/>
    <property type="evidence" value="ECO:0007669"/>
    <property type="project" value="GOC"/>
</dbReference>
<dbReference type="GO" id="GO:0008780">
    <property type="term" value="F:acyl-[acyl-carrier-protein]-UDP-N-acetylglucosamine O-acyltransferase activity"/>
    <property type="evidence" value="ECO:0007669"/>
    <property type="project" value="UniProtKB-UniRule"/>
</dbReference>
<dbReference type="GO" id="GO:0009245">
    <property type="term" value="P:lipid A biosynthetic process"/>
    <property type="evidence" value="ECO:0007669"/>
    <property type="project" value="UniProtKB-UniRule"/>
</dbReference>
<dbReference type="CDD" id="cd03351">
    <property type="entry name" value="LbH_UDP-GlcNAc_AT"/>
    <property type="match status" value="1"/>
</dbReference>
<dbReference type="Gene3D" id="2.160.10.10">
    <property type="entry name" value="Hexapeptide repeat proteins"/>
    <property type="match status" value="1"/>
</dbReference>
<dbReference type="Gene3D" id="1.20.1180.10">
    <property type="entry name" value="Udp N-acetylglucosamine O-acyltransferase, C-terminal domain"/>
    <property type="match status" value="1"/>
</dbReference>
<dbReference type="HAMAP" id="MF_00387">
    <property type="entry name" value="LpxA"/>
    <property type="match status" value="1"/>
</dbReference>
<dbReference type="InterPro" id="IPR029098">
    <property type="entry name" value="Acetyltransf_C"/>
</dbReference>
<dbReference type="InterPro" id="IPR037157">
    <property type="entry name" value="Acetyltransf_C_sf"/>
</dbReference>
<dbReference type="InterPro" id="IPR001451">
    <property type="entry name" value="Hexapep"/>
</dbReference>
<dbReference type="InterPro" id="IPR018357">
    <property type="entry name" value="Hexapep_transf_CS"/>
</dbReference>
<dbReference type="InterPro" id="IPR010137">
    <property type="entry name" value="Lipid_A_LpxA"/>
</dbReference>
<dbReference type="InterPro" id="IPR011004">
    <property type="entry name" value="Trimer_LpxA-like_sf"/>
</dbReference>
<dbReference type="NCBIfam" id="TIGR01852">
    <property type="entry name" value="lipid_A_lpxA"/>
    <property type="match status" value="1"/>
</dbReference>
<dbReference type="NCBIfam" id="NF003657">
    <property type="entry name" value="PRK05289.1"/>
    <property type="match status" value="1"/>
</dbReference>
<dbReference type="PANTHER" id="PTHR43480">
    <property type="entry name" value="ACYL-[ACYL-CARRIER-PROTEIN]--UDP-N-ACETYLGLUCOSAMINE O-ACYLTRANSFERASE"/>
    <property type="match status" value="1"/>
</dbReference>
<dbReference type="PANTHER" id="PTHR43480:SF1">
    <property type="entry name" value="ACYL-[ACYL-CARRIER-PROTEIN]--UDP-N-ACETYLGLUCOSAMINE O-ACYLTRANSFERASE, MITOCHONDRIAL-RELATED"/>
    <property type="match status" value="1"/>
</dbReference>
<dbReference type="Pfam" id="PF13720">
    <property type="entry name" value="Acetyltransf_11"/>
    <property type="match status" value="1"/>
</dbReference>
<dbReference type="Pfam" id="PF00132">
    <property type="entry name" value="Hexapep"/>
    <property type="match status" value="2"/>
</dbReference>
<dbReference type="PIRSF" id="PIRSF000456">
    <property type="entry name" value="UDP-GlcNAc_acltr"/>
    <property type="match status" value="1"/>
</dbReference>
<dbReference type="SUPFAM" id="SSF51161">
    <property type="entry name" value="Trimeric LpxA-like enzymes"/>
    <property type="match status" value="1"/>
</dbReference>
<dbReference type="PROSITE" id="PS00101">
    <property type="entry name" value="HEXAPEP_TRANSFERASES"/>
    <property type="match status" value="1"/>
</dbReference>
<feature type="chain" id="PRO_1000013147" description="Acyl-[acyl-carrier-protein]--UDP-N-acetylglucosamine O-acyltransferase">
    <location>
        <begin position="1"/>
        <end position="278"/>
    </location>
</feature>
<evidence type="ECO:0000255" key="1">
    <source>
        <dbReference type="HAMAP-Rule" id="MF_00387"/>
    </source>
</evidence>
<organism>
    <name type="scientific">Brucella ovis (strain ATCC 25840 / 63/290 / NCTC 10512)</name>
    <dbReference type="NCBI Taxonomy" id="444178"/>
    <lineage>
        <taxon>Bacteria</taxon>
        <taxon>Pseudomonadati</taxon>
        <taxon>Pseudomonadota</taxon>
        <taxon>Alphaproteobacteria</taxon>
        <taxon>Hyphomicrobiales</taxon>
        <taxon>Brucellaceae</taxon>
        <taxon>Brucella/Ochrobactrum group</taxon>
        <taxon>Brucella</taxon>
    </lineage>
</organism>
<protein>
    <recommendedName>
        <fullName evidence="1">Acyl-[acyl-carrier-protein]--UDP-N-acetylglucosamine O-acyltransferase</fullName>
        <shortName evidence="1">UDP-N-acetylglucosamine acyltransferase</shortName>
        <ecNumber evidence="1">2.3.1.129</ecNumber>
    </recommendedName>
</protein>
<reference key="1">
    <citation type="journal article" date="2009" name="PLoS ONE">
        <title>Genome degradation in Brucella ovis corresponds with narrowing of its host range and tissue tropism.</title>
        <authorList>
            <person name="Tsolis R.M."/>
            <person name="Seshadri R."/>
            <person name="Santos R.L."/>
            <person name="Sangari F.J."/>
            <person name="Lobo J.M."/>
            <person name="de Jong M.F."/>
            <person name="Ren Q."/>
            <person name="Myers G."/>
            <person name="Brinkac L.M."/>
            <person name="Nelson W.C."/>
            <person name="Deboy R.T."/>
            <person name="Angiuoli S."/>
            <person name="Khouri H."/>
            <person name="Dimitrov G."/>
            <person name="Robinson J.R."/>
            <person name="Mulligan S."/>
            <person name="Walker R.L."/>
            <person name="Elzer P.E."/>
            <person name="Hassan K.A."/>
            <person name="Paulsen I.T."/>
        </authorList>
    </citation>
    <scope>NUCLEOTIDE SEQUENCE [LARGE SCALE GENOMIC DNA]</scope>
    <source>
        <strain>ATCC 25840 / 63/290 / NCTC 10512</strain>
    </source>
</reference>
<sequence length="278" mass="29386">MKETFIHPTALVEPGVELGQGVSVGPFCHVQSGAIIGNDCELMSHVVITGATTLGAGTKVYPHAILGCDPQNNKHKGGPTRLNVGVNCIIREGVTMHKGSDNARGYTSIGDNCSFLAYAHVAHDCDIGDYVTFSNNVMIGGHTSIGHHAILGGGAAVHQFVRVGHHAFIGGLAAVVSDLIPYGMAIGVHAHLGGLNIIGMKRSGMERKEIHNLRHAVRMLFDRTKPIRQRAQDVLAAIPDSPTVSDMISFINVDTKRAYCTPPLDAAHGGAGHDSDED</sequence>
<accession>A5VQS3</accession>
<name>LPXA_BRUO2</name>
<keyword id="KW-0012">Acyltransferase</keyword>
<keyword id="KW-0963">Cytoplasm</keyword>
<keyword id="KW-0441">Lipid A biosynthesis</keyword>
<keyword id="KW-0444">Lipid biosynthesis</keyword>
<keyword id="KW-0443">Lipid metabolism</keyword>
<keyword id="KW-0677">Repeat</keyword>
<keyword id="KW-0808">Transferase</keyword>
<gene>
    <name evidence="1" type="primary">lpxA</name>
    <name type="ordered locus">BOV_1109</name>
</gene>
<proteinExistence type="inferred from homology"/>